<sequence length="165" mass="19245">MYIEMVDETGQVSKEMLQQTQEILEFAAQKLGKEDKEMAVTFVTNERSHELNLEYRDTDRPTDVISLEYKPELEIAFDEEDLLENPELAEMMSEFDAYIGELFISIDKAHEQAEEYGHSFEREMGFLAVHGFLHINGYDHYTPEEEAEMFGLQEEILTAYGLTRQ</sequence>
<protein>
    <recommendedName>
        <fullName evidence="1">Endoribonuclease YbeY</fullName>
        <ecNumber evidence="1">3.1.-.-</ecNumber>
    </recommendedName>
</protein>
<gene>
    <name evidence="1" type="primary">ybeY</name>
    <name type="ordered locus">SPJ_0908</name>
</gene>
<proteinExistence type="inferred from homology"/>
<comment type="function">
    <text evidence="1">Single strand-specific metallo-endoribonuclease involved in late-stage 70S ribosome quality control and in maturation of the 3' terminus of the 16S rRNA.</text>
</comment>
<comment type="cofactor">
    <cofactor evidence="1">
        <name>Zn(2+)</name>
        <dbReference type="ChEBI" id="CHEBI:29105"/>
    </cofactor>
    <text evidence="1">Binds 1 zinc ion.</text>
</comment>
<comment type="subcellular location">
    <subcellularLocation>
        <location evidence="1">Cytoplasm</location>
    </subcellularLocation>
</comment>
<comment type="similarity">
    <text evidence="1">Belongs to the endoribonuclease YbeY family.</text>
</comment>
<accession>C1CDW2</accession>
<keyword id="KW-0963">Cytoplasm</keyword>
<keyword id="KW-0255">Endonuclease</keyword>
<keyword id="KW-0378">Hydrolase</keyword>
<keyword id="KW-0479">Metal-binding</keyword>
<keyword id="KW-0540">Nuclease</keyword>
<keyword id="KW-0690">Ribosome biogenesis</keyword>
<keyword id="KW-0698">rRNA processing</keyword>
<keyword id="KW-0862">Zinc</keyword>
<organism>
    <name type="scientific">Streptococcus pneumoniae (strain JJA)</name>
    <dbReference type="NCBI Taxonomy" id="488222"/>
    <lineage>
        <taxon>Bacteria</taxon>
        <taxon>Bacillati</taxon>
        <taxon>Bacillota</taxon>
        <taxon>Bacilli</taxon>
        <taxon>Lactobacillales</taxon>
        <taxon>Streptococcaceae</taxon>
        <taxon>Streptococcus</taxon>
    </lineage>
</organism>
<feature type="chain" id="PRO_1000199998" description="Endoribonuclease YbeY">
    <location>
        <begin position="1"/>
        <end position="165"/>
    </location>
</feature>
<feature type="binding site" evidence="1">
    <location>
        <position position="130"/>
    </location>
    <ligand>
        <name>Zn(2+)</name>
        <dbReference type="ChEBI" id="CHEBI:29105"/>
        <note>catalytic</note>
    </ligand>
</feature>
<feature type="binding site" evidence="1">
    <location>
        <position position="134"/>
    </location>
    <ligand>
        <name>Zn(2+)</name>
        <dbReference type="ChEBI" id="CHEBI:29105"/>
        <note>catalytic</note>
    </ligand>
</feature>
<feature type="binding site" evidence="1">
    <location>
        <position position="140"/>
    </location>
    <ligand>
        <name>Zn(2+)</name>
        <dbReference type="ChEBI" id="CHEBI:29105"/>
        <note>catalytic</note>
    </ligand>
</feature>
<evidence type="ECO:0000255" key="1">
    <source>
        <dbReference type="HAMAP-Rule" id="MF_00009"/>
    </source>
</evidence>
<dbReference type="EC" id="3.1.-.-" evidence="1"/>
<dbReference type="EMBL" id="CP000919">
    <property type="protein sequence ID" value="ACO18057.1"/>
    <property type="molecule type" value="Genomic_DNA"/>
</dbReference>
<dbReference type="RefSeq" id="WP_000275156.1">
    <property type="nucleotide sequence ID" value="NC_012466.1"/>
</dbReference>
<dbReference type="SMR" id="C1CDW2"/>
<dbReference type="GeneID" id="93739770"/>
<dbReference type="KEGG" id="sjj:SPJ_0908"/>
<dbReference type="HOGENOM" id="CLU_106710_3_0_9"/>
<dbReference type="Proteomes" id="UP000002206">
    <property type="component" value="Chromosome"/>
</dbReference>
<dbReference type="GO" id="GO:0005737">
    <property type="term" value="C:cytoplasm"/>
    <property type="evidence" value="ECO:0007669"/>
    <property type="project" value="UniProtKB-SubCell"/>
</dbReference>
<dbReference type="GO" id="GO:0004222">
    <property type="term" value="F:metalloendopeptidase activity"/>
    <property type="evidence" value="ECO:0007669"/>
    <property type="project" value="InterPro"/>
</dbReference>
<dbReference type="GO" id="GO:0004521">
    <property type="term" value="F:RNA endonuclease activity"/>
    <property type="evidence" value="ECO:0007669"/>
    <property type="project" value="UniProtKB-UniRule"/>
</dbReference>
<dbReference type="GO" id="GO:0008270">
    <property type="term" value="F:zinc ion binding"/>
    <property type="evidence" value="ECO:0007669"/>
    <property type="project" value="UniProtKB-UniRule"/>
</dbReference>
<dbReference type="GO" id="GO:0006364">
    <property type="term" value="P:rRNA processing"/>
    <property type="evidence" value="ECO:0007669"/>
    <property type="project" value="UniProtKB-UniRule"/>
</dbReference>
<dbReference type="Gene3D" id="3.40.390.30">
    <property type="entry name" value="Metalloproteases ('zincins'), catalytic domain"/>
    <property type="match status" value="1"/>
</dbReference>
<dbReference type="HAMAP" id="MF_00009">
    <property type="entry name" value="Endoribonucl_YbeY"/>
    <property type="match status" value="1"/>
</dbReference>
<dbReference type="InterPro" id="IPR023091">
    <property type="entry name" value="MetalPrtase_cat_dom_sf_prd"/>
</dbReference>
<dbReference type="InterPro" id="IPR002036">
    <property type="entry name" value="YbeY"/>
</dbReference>
<dbReference type="InterPro" id="IPR020549">
    <property type="entry name" value="YbeY_CS"/>
</dbReference>
<dbReference type="NCBIfam" id="TIGR00043">
    <property type="entry name" value="rRNA maturation RNase YbeY"/>
    <property type="match status" value="1"/>
</dbReference>
<dbReference type="PANTHER" id="PTHR46986">
    <property type="entry name" value="ENDORIBONUCLEASE YBEY, CHLOROPLASTIC"/>
    <property type="match status" value="1"/>
</dbReference>
<dbReference type="PANTHER" id="PTHR46986:SF1">
    <property type="entry name" value="ENDORIBONUCLEASE YBEY, CHLOROPLASTIC"/>
    <property type="match status" value="1"/>
</dbReference>
<dbReference type="Pfam" id="PF02130">
    <property type="entry name" value="YbeY"/>
    <property type="match status" value="1"/>
</dbReference>
<dbReference type="SUPFAM" id="SSF55486">
    <property type="entry name" value="Metalloproteases ('zincins'), catalytic domain"/>
    <property type="match status" value="1"/>
</dbReference>
<dbReference type="PROSITE" id="PS01306">
    <property type="entry name" value="UPF0054"/>
    <property type="match status" value="1"/>
</dbReference>
<reference key="1">
    <citation type="journal article" date="2010" name="Genome Biol.">
        <title>Structure and dynamics of the pan-genome of Streptococcus pneumoniae and closely related species.</title>
        <authorList>
            <person name="Donati C."/>
            <person name="Hiller N.L."/>
            <person name="Tettelin H."/>
            <person name="Muzzi A."/>
            <person name="Croucher N.J."/>
            <person name="Angiuoli S.V."/>
            <person name="Oggioni M."/>
            <person name="Dunning Hotopp J.C."/>
            <person name="Hu F.Z."/>
            <person name="Riley D.R."/>
            <person name="Covacci A."/>
            <person name="Mitchell T.J."/>
            <person name="Bentley S.D."/>
            <person name="Kilian M."/>
            <person name="Ehrlich G.D."/>
            <person name="Rappuoli R."/>
            <person name="Moxon E.R."/>
            <person name="Masignani V."/>
        </authorList>
    </citation>
    <scope>NUCLEOTIDE SEQUENCE [LARGE SCALE GENOMIC DNA]</scope>
    <source>
        <strain>JJA</strain>
    </source>
</reference>
<name>YBEY_STRZJ</name>